<dbReference type="EMBL" id="AL049862">
    <property type="protein sequence ID" value="CAB42925.1"/>
    <property type="status" value="ALT_SEQ"/>
    <property type="molecule type" value="Genomic_DNA"/>
</dbReference>
<dbReference type="EMBL" id="CP002686">
    <property type="protein sequence ID" value="AEE78732.1"/>
    <property type="molecule type" value="Genomic_DNA"/>
</dbReference>
<dbReference type="EMBL" id="CP002686">
    <property type="protein sequence ID" value="ANM63810.1"/>
    <property type="molecule type" value="Genomic_DNA"/>
</dbReference>
<dbReference type="EMBL" id="BT010901">
    <property type="protein sequence ID" value="AAR24679.1"/>
    <property type="molecule type" value="mRNA"/>
</dbReference>
<dbReference type="EMBL" id="AK229066">
    <property type="protein sequence ID" value="BAF00947.1"/>
    <property type="molecule type" value="mRNA"/>
</dbReference>
<dbReference type="PIR" id="T08417">
    <property type="entry name" value="T08417"/>
</dbReference>
<dbReference type="RefSeq" id="NP_001325881.1">
    <property type="nucleotide sequence ID" value="NM_001339487.1"/>
</dbReference>
<dbReference type="RefSeq" id="NP_190665.2">
    <property type="nucleotide sequence ID" value="NM_114956.3"/>
</dbReference>
<dbReference type="SMR" id="Q6NPL9"/>
<dbReference type="BioGRID" id="9578">
    <property type="interactions" value="6"/>
</dbReference>
<dbReference type="FunCoup" id="Q6NPL9">
    <property type="interactions" value="116"/>
</dbReference>
<dbReference type="IntAct" id="Q6NPL9">
    <property type="interactions" value="4"/>
</dbReference>
<dbReference type="STRING" id="3702.Q6NPL9"/>
<dbReference type="PaxDb" id="3702-AT3G50960.1"/>
<dbReference type="ProteomicsDB" id="234729"/>
<dbReference type="EnsemblPlants" id="AT3G50960.1">
    <property type="protein sequence ID" value="AT3G50960.1"/>
    <property type="gene ID" value="AT3G50960"/>
</dbReference>
<dbReference type="EnsemblPlants" id="AT3G50960.2">
    <property type="protein sequence ID" value="AT3G50960.2"/>
    <property type="gene ID" value="AT3G50960"/>
</dbReference>
<dbReference type="GeneID" id="824260"/>
<dbReference type="Gramene" id="AT3G50960.1">
    <property type="protein sequence ID" value="AT3G50960.1"/>
    <property type="gene ID" value="AT3G50960"/>
</dbReference>
<dbReference type="Gramene" id="AT3G50960.2">
    <property type="protein sequence ID" value="AT3G50960.2"/>
    <property type="gene ID" value="AT3G50960"/>
</dbReference>
<dbReference type="KEGG" id="ath:AT3G50960"/>
<dbReference type="Araport" id="AT3G50960"/>
<dbReference type="TAIR" id="AT3G50960">
    <property type="gene designation" value="PLP3A"/>
</dbReference>
<dbReference type="eggNOG" id="KOG1672">
    <property type="taxonomic scope" value="Eukaryota"/>
</dbReference>
<dbReference type="HOGENOM" id="CLU_072378_3_0_1"/>
<dbReference type="InParanoid" id="Q6NPL9"/>
<dbReference type="OMA" id="AITTECC"/>
<dbReference type="PhylomeDB" id="Q6NPL9"/>
<dbReference type="PRO" id="PR:Q6NPL9"/>
<dbReference type="Proteomes" id="UP000006548">
    <property type="component" value="Chromosome 3"/>
</dbReference>
<dbReference type="ExpressionAtlas" id="Q6NPL9">
    <property type="expression patterns" value="baseline and differential"/>
</dbReference>
<dbReference type="GO" id="GO:0005737">
    <property type="term" value="C:cytoplasm"/>
    <property type="evidence" value="ECO:0000314"/>
    <property type="project" value="TAIR"/>
</dbReference>
<dbReference type="GO" id="GO:0005874">
    <property type="term" value="C:microtubule"/>
    <property type="evidence" value="ECO:0007669"/>
    <property type="project" value="UniProtKB-KW"/>
</dbReference>
<dbReference type="GO" id="GO:0005634">
    <property type="term" value="C:nucleus"/>
    <property type="evidence" value="ECO:0000314"/>
    <property type="project" value="TAIR"/>
</dbReference>
<dbReference type="GO" id="GO:0048487">
    <property type="term" value="F:beta-tubulin binding"/>
    <property type="evidence" value="ECO:0000353"/>
    <property type="project" value="UniProtKB"/>
</dbReference>
<dbReference type="GO" id="GO:0043622">
    <property type="term" value="P:cortical microtubule organization"/>
    <property type="evidence" value="ECO:0000316"/>
    <property type="project" value="TAIR"/>
</dbReference>
<dbReference type="CDD" id="cd02989">
    <property type="entry name" value="Phd_like_TxnDC9"/>
    <property type="match status" value="1"/>
</dbReference>
<dbReference type="FunFam" id="3.40.30.10:FF:000319">
    <property type="entry name" value="Thioredoxin domain-containing protein PLP3B"/>
    <property type="match status" value="1"/>
</dbReference>
<dbReference type="Gene3D" id="3.40.30.10">
    <property type="entry name" value="Glutaredoxin"/>
    <property type="match status" value="1"/>
</dbReference>
<dbReference type="InterPro" id="IPR036249">
    <property type="entry name" value="Thioredoxin-like_sf"/>
</dbReference>
<dbReference type="InterPro" id="IPR013766">
    <property type="entry name" value="Thioredoxin_domain"/>
</dbReference>
<dbReference type="PANTHER" id="PTHR21148">
    <property type="entry name" value="THIOREDOXIN DOMAIN-CONTAINING PROTEIN 9"/>
    <property type="match status" value="1"/>
</dbReference>
<dbReference type="Pfam" id="PF00085">
    <property type="entry name" value="Thioredoxin"/>
    <property type="match status" value="1"/>
</dbReference>
<dbReference type="SUPFAM" id="SSF52833">
    <property type="entry name" value="Thioredoxin-like"/>
    <property type="match status" value="1"/>
</dbReference>
<gene>
    <name type="primary">PLP3A</name>
    <name type="ordered locus">At3g50960</name>
    <name type="ORF">F18B3.240</name>
</gene>
<keyword id="KW-0963">Cytoplasm</keyword>
<keyword id="KW-0493">Microtubule</keyword>
<keyword id="KW-0539">Nucleus</keyword>
<keyword id="KW-1185">Reference proteome</keyword>
<accession>Q6NPL9</accession>
<accession>Q9SVK3</accession>
<organism>
    <name type="scientific">Arabidopsis thaliana</name>
    <name type="common">Mouse-ear cress</name>
    <dbReference type="NCBI Taxonomy" id="3702"/>
    <lineage>
        <taxon>Eukaryota</taxon>
        <taxon>Viridiplantae</taxon>
        <taxon>Streptophyta</taxon>
        <taxon>Embryophyta</taxon>
        <taxon>Tracheophyta</taxon>
        <taxon>Spermatophyta</taxon>
        <taxon>Magnoliopsida</taxon>
        <taxon>eudicotyledons</taxon>
        <taxon>Gunneridae</taxon>
        <taxon>Pentapetalae</taxon>
        <taxon>rosids</taxon>
        <taxon>malvids</taxon>
        <taxon>Brassicales</taxon>
        <taxon>Brassicaceae</taxon>
        <taxon>Camelineae</taxon>
        <taxon>Arabidopsis</taxon>
    </lineage>
</organism>
<evidence type="ECO:0000256" key="1">
    <source>
        <dbReference type="SAM" id="MobiDB-lite"/>
    </source>
</evidence>
<evidence type="ECO:0000269" key="2">
    <source>
    </source>
</evidence>
<evidence type="ECO:0000305" key="3"/>
<evidence type="ECO:0000305" key="4">
    <source>
    </source>
</evidence>
<sequence length="230" mass="26263">MDPDAVKSTLSNLAFGNVMAAAARNYQKEVLANEKAQGSNPVNEEVDLDELMDDPELERLHADRIAALKREVEKRESFKRQGHGEYREVSEGDFLGEVTRSEKVICHFYHKEFYRCKIMDKHLKTLAPRHVDTKFIKVDAENAPFFVTKLAIKTLPCVVLFSKGVAMDRLVGFQDLGTKDDFTTNKLENVLLKKGMLSKKKKEEDDEDAEYQESIRRSVRSSENLDSDSD</sequence>
<feature type="chain" id="PRO_0000428876" description="Thioredoxin domain-containing protein PLP3A">
    <location>
        <begin position="1"/>
        <end position="230"/>
    </location>
</feature>
<feature type="domain" description="Thioredoxin">
    <location>
        <begin position="89"/>
        <end position="173"/>
    </location>
</feature>
<feature type="region of interest" description="Disordered" evidence="1">
    <location>
        <begin position="197"/>
        <end position="230"/>
    </location>
</feature>
<reference key="1">
    <citation type="journal article" date="2000" name="Nature">
        <title>Sequence and analysis of chromosome 3 of the plant Arabidopsis thaliana.</title>
        <authorList>
            <person name="Salanoubat M."/>
            <person name="Lemcke K."/>
            <person name="Rieger M."/>
            <person name="Ansorge W."/>
            <person name="Unseld M."/>
            <person name="Fartmann B."/>
            <person name="Valle G."/>
            <person name="Bloecker H."/>
            <person name="Perez-Alonso M."/>
            <person name="Obermaier B."/>
            <person name="Delseny M."/>
            <person name="Boutry M."/>
            <person name="Grivell L.A."/>
            <person name="Mache R."/>
            <person name="Puigdomenech P."/>
            <person name="De Simone V."/>
            <person name="Choisne N."/>
            <person name="Artiguenave F."/>
            <person name="Robert C."/>
            <person name="Brottier P."/>
            <person name="Wincker P."/>
            <person name="Cattolico L."/>
            <person name="Weissenbach J."/>
            <person name="Saurin W."/>
            <person name="Quetier F."/>
            <person name="Schaefer M."/>
            <person name="Mueller-Auer S."/>
            <person name="Gabel C."/>
            <person name="Fuchs M."/>
            <person name="Benes V."/>
            <person name="Wurmbach E."/>
            <person name="Drzonek H."/>
            <person name="Erfle H."/>
            <person name="Jordan N."/>
            <person name="Bangert S."/>
            <person name="Wiedelmann R."/>
            <person name="Kranz H."/>
            <person name="Voss H."/>
            <person name="Holland R."/>
            <person name="Brandt P."/>
            <person name="Nyakatura G."/>
            <person name="Vezzi A."/>
            <person name="D'Angelo M."/>
            <person name="Pallavicini A."/>
            <person name="Toppo S."/>
            <person name="Simionati B."/>
            <person name="Conrad A."/>
            <person name="Hornischer K."/>
            <person name="Kauer G."/>
            <person name="Loehnert T.-H."/>
            <person name="Nordsiek G."/>
            <person name="Reichelt J."/>
            <person name="Scharfe M."/>
            <person name="Schoen O."/>
            <person name="Bargues M."/>
            <person name="Terol J."/>
            <person name="Climent J."/>
            <person name="Navarro P."/>
            <person name="Collado C."/>
            <person name="Perez-Perez A."/>
            <person name="Ottenwaelder B."/>
            <person name="Duchemin D."/>
            <person name="Cooke R."/>
            <person name="Laudie M."/>
            <person name="Berger-Llauro C."/>
            <person name="Purnelle B."/>
            <person name="Masuy D."/>
            <person name="de Haan M."/>
            <person name="Maarse A.C."/>
            <person name="Alcaraz J.-P."/>
            <person name="Cottet A."/>
            <person name="Casacuberta E."/>
            <person name="Monfort A."/>
            <person name="Argiriou A."/>
            <person name="Flores M."/>
            <person name="Liguori R."/>
            <person name="Vitale D."/>
            <person name="Mannhaupt G."/>
            <person name="Haase D."/>
            <person name="Schoof H."/>
            <person name="Rudd S."/>
            <person name="Zaccaria P."/>
            <person name="Mewes H.-W."/>
            <person name="Mayer K.F.X."/>
            <person name="Kaul S."/>
            <person name="Town C.D."/>
            <person name="Koo H.L."/>
            <person name="Tallon L.J."/>
            <person name="Jenkins J."/>
            <person name="Rooney T."/>
            <person name="Rizzo M."/>
            <person name="Walts A."/>
            <person name="Utterback T."/>
            <person name="Fujii C.Y."/>
            <person name="Shea T.P."/>
            <person name="Creasy T.H."/>
            <person name="Haas B."/>
            <person name="Maiti R."/>
            <person name="Wu D."/>
            <person name="Peterson J."/>
            <person name="Van Aken S."/>
            <person name="Pai G."/>
            <person name="Militscher J."/>
            <person name="Sellers P."/>
            <person name="Gill J.E."/>
            <person name="Feldblyum T.V."/>
            <person name="Preuss D."/>
            <person name="Lin X."/>
            <person name="Nierman W.C."/>
            <person name="Salzberg S.L."/>
            <person name="White O."/>
            <person name="Venter J.C."/>
            <person name="Fraser C.M."/>
            <person name="Kaneko T."/>
            <person name="Nakamura Y."/>
            <person name="Sato S."/>
            <person name="Kato T."/>
            <person name="Asamizu E."/>
            <person name="Sasamoto S."/>
            <person name="Kimura T."/>
            <person name="Idesawa K."/>
            <person name="Kawashima K."/>
            <person name="Kishida Y."/>
            <person name="Kiyokawa C."/>
            <person name="Kohara M."/>
            <person name="Matsumoto M."/>
            <person name="Matsuno A."/>
            <person name="Muraki A."/>
            <person name="Nakayama S."/>
            <person name="Nakazaki N."/>
            <person name="Shinpo S."/>
            <person name="Takeuchi C."/>
            <person name="Wada T."/>
            <person name="Watanabe A."/>
            <person name="Yamada M."/>
            <person name="Yasuda M."/>
            <person name="Tabata S."/>
        </authorList>
    </citation>
    <scope>NUCLEOTIDE SEQUENCE [LARGE SCALE GENOMIC DNA]</scope>
    <source>
        <strain>cv. Columbia</strain>
    </source>
</reference>
<reference key="2">
    <citation type="journal article" date="2017" name="Plant J.">
        <title>Araport11: a complete reannotation of the Arabidopsis thaliana reference genome.</title>
        <authorList>
            <person name="Cheng C.Y."/>
            <person name="Krishnakumar V."/>
            <person name="Chan A.P."/>
            <person name="Thibaud-Nissen F."/>
            <person name="Schobel S."/>
            <person name="Town C.D."/>
        </authorList>
    </citation>
    <scope>GENOME REANNOTATION</scope>
    <source>
        <strain>cv. Columbia</strain>
    </source>
</reference>
<reference key="3">
    <citation type="submission" date="2003-12" db="EMBL/GenBank/DDBJ databases">
        <title>Arabidopsis ORF clones.</title>
        <authorList>
            <person name="Kim C.J."/>
            <person name="Chen H."/>
            <person name="Cheuk R.F."/>
            <person name="Shinn P."/>
            <person name="Ecker J.R."/>
        </authorList>
    </citation>
    <scope>NUCLEOTIDE SEQUENCE [LARGE SCALE MRNA]</scope>
    <source>
        <strain>cv. Columbia</strain>
    </source>
</reference>
<reference key="4">
    <citation type="submission" date="2006-07" db="EMBL/GenBank/DDBJ databases">
        <title>Large-scale analysis of RIKEN Arabidopsis full-length (RAFL) cDNAs.</title>
        <authorList>
            <person name="Totoki Y."/>
            <person name="Seki M."/>
            <person name="Ishida J."/>
            <person name="Nakajima M."/>
            <person name="Enju A."/>
            <person name="Kamiya A."/>
            <person name="Narusaka M."/>
            <person name="Shin-i T."/>
            <person name="Nakagawa M."/>
            <person name="Sakamoto N."/>
            <person name="Oishi K."/>
            <person name="Kohara Y."/>
            <person name="Kobayashi M."/>
            <person name="Toyoda A."/>
            <person name="Sakaki Y."/>
            <person name="Sakurai T."/>
            <person name="Iida K."/>
            <person name="Akiyama K."/>
            <person name="Satou M."/>
            <person name="Toyoda T."/>
            <person name="Konagaya A."/>
            <person name="Carninci P."/>
            <person name="Kawai J."/>
            <person name="Hayashizaki Y."/>
            <person name="Shinozaki K."/>
        </authorList>
    </citation>
    <scope>NUCLEOTIDE SEQUENCE [LARGE SCALE MRNA]</scope>
    <source>
        <strain>cv. Columbia</strain>
    </source>
</reference>
<reference key="5">
    <citation type="journal article" date="2008" name="Plant Cell">
        <title>Phosducin-Like Protein 3 is required for microtubule-dependent steps of cell division but not for meristem growth in Arabidopsis.</title>
        <authorList>
            <person name="Castellano M.M."/>
            <person name="Sablowski R."/>
        </authorList>
    </citation>
    <scope>FUNCTION</scope>
    <scope>INTERACTION WITH TUBB2; TUBB3; TUBB4 AND TUBB5</scope>
    <scope>SUBCELLULAR LOCATION</scope>
    <scope>TISSUE SPECIFICITY</scope>
</reference>
<name>PLP3A_ARATH</name>
<protein>
    <recommendedName>
        <fullName>Thioredoxin domain-containing protein PLP3A</fullName>
    </recommendedName>
    <alternativeName>
        <fullName>Phosducin-like protein 3A</fullName>
    </alternativeName>
</protein>
<comment type="function">
    <text evidence="2">Tubulin-binding protein involved in microtubule formation.</text>
</comment>
<comment type="subunit">
    <text evidence="2">Interacts with TUBB2, TUBB3, TUBB4 and TUBB5.</text>
</comment>
<comment type="subcellular location">
    <subcellularLocation>
        <location evidence="2">Cytoplasm</location>
    </subcellularLocation>
    <subcellularLocation>
        <location evidence="2">Nucleus</location>
    </subcellularLocation>
</comment>
<comment type="tissue specificity">
    <text evidence="2">Expressed in embryos, shoot meristems, leaf primordia, root meristems, floral meristems and young floral buds.</text>
</comment>
<comment type="miscellaneous">
    <text evidence="4">Plant roots over-expressing PLP3A have increased microtubule resistance to propyzamide, an inhibitor of tubulin polymerization. Plants with reduced levels of both PLP3A and PLP3B show defects in cytokinesis, cortical microtubule array formation, oriented cell growth, and maintenance of proper ploidy (PubMed:18390592).</text>
</comment>
<comment type="similarity">
    <text evidence="3">Belongs to the phosducin family.</text>
</comment>
<comment type="sequence caution" evidence="3">
    <conflict type="erroneous gene model prediction">
        <sequence resource="EMBL-CDS" id="CAB42925"/>
    </conflict>
</comment>
<proteinExistence type="evidence at protein level"/>